<reference key="1">
    <citation type="journal article" date="2015" name="Proteomics">
        <title>Transcriptome and proteome of Conus planorbis identify the nicotinic receptors as primary target for the defensive venom.</title>
        <authorList>
            <person name="Jin A.H."/>
            <person name="Vetter I."/>
            <person name="Himaya S.W."/>
            <person name="Alewood P.F."/>
            <person name="Lewis R.J."/>
            <person name="Dutertre S."/>
        </authorList>
    </citation>
    <scope>NUCLEOTIDE SEQUENCE [MRNA]</scope>
    <scope>PROTEIN SEQUENCE OF 32-69</scope>
    <scope>SUBCELLULAR LOCATION</scope>
    <scope>AMIDATION AT TYR-69</scope>
    <source>
        <tissue>Venom</tissue>
        <tissue>Venom duct</tissue>
    </source>
</reference>
<comment type="function">
    <text evidence="4">Probable neurotoxin with unknown target. Possibly targets ion channels.</text>
</comment>
<comment type="subcellular location">
    <subcellularLocation>
        <location evidence="2">Secreted</location>
    </subcellularLocation>
</comment>
<comment type="tissue specificity">
    <text evidence="5">Expressed by the venom duct.</text>
</comment>
<comment type="miscellaneous">
    <text evidence="4">The mature peptide does not contain cysteine residue.</text>
</comment>
<comment type="similarity">
    <text evidence="4">Belongs to the conotoxin NSf-1 superfamily.</text>
</comment>
<evidence type="ECO:0000255" key="1"/>
<evidence type="ECO:0000269" key="2">
    <source>
    </source>
</evidence>
<evidence type="ECO:0000303" key="3">
    <source>
    </source>
</evidence>
<evidence type="ECO:0000305" key="4"/>
<evidence type="ECO:0000305" key="5">
    <source>
    </source>
</evidence>
<accession>P0DUQ7</accession>
<dbReference type="GO" id="GO:0005576">
    <property type="term" value="C:extracellular region"/>
    <property type="evidence" value="ECO:0007669"/>
    <property type="project" value="UniProtKB-SubCell"/>
</dbReference>
<dbReference type="GO" id="GO:0099106">
    <property type="term" value="F:ion channel regulator activity"/>
    <property type="evidence" value="ECO:0007669"/>
    <property type="project" value="UniProtKB-KW"/>
</dbReference>
<dbReference type="GO" id="GO:0090729">
    <property type="term" value="F:toxin activity"/>
    <property type="evidence" value="ECO:0007669"/>
    <property type="project" value="UniProtKB-KW"/>
</dbReference>
<organism>
    <name type="scientific">Conus planorbis</name>
    <name type="common">Planorbis cone</name>
    <dbReference type="NCBI Taxonomy" id="97183"/>
    <lineage>
        <taxon>Eukaryota</taxon>
        <taxon>Metazoa</taxon>
        <taxon>Spiralia</taxon>
        <taxon>Lophotrochozoa</taxon>
        <taxon>Mollusca</taxon>
        <taxon>Gastropoda</taxon>
        <taxon>Caenogastropoda</taxon>
        <taxon>Neogastropoda</taxon>
        <taxon>Conoidea</taxon>
        <taxon>Conidae</taxon>
        <taxon>Conus</taxon>
        <taxon>Strategoconus</taxon>
    </lineage>
</organism>
<name>CX071_CONPO</name>
<keyword id="KW-0027">Amidation</keyword>
<keyword id="KW-0165">Cleavage on pair of basic residues</keyword>
<keyword id="KW-0903">Direct protein sequencing</keyword>
<keyword id="KW-0872">Ion channel impairing toxin</keyword>
<keyword id="KW-0528">Neurotoxin</keyword>
<keyword id="KW-0964">Secreted</keyword>
<keyword id="KW-0732">Signal</keyword>
<keyword id="KW-0800">Toxin</keyword>
<sequence>MSRLFMILLVICVITLGTDASQAEDSGTEKRSWPVPDAFLKAFQSWPLTDPDLKAGFKVNSAQRVAHGYGK</sequence>
<protein>
    <recommendedName>
        <fullName evidence="3">Conotoxin Pl071</fullName>
    </recommendedName>
</protein>
<feature type="signal peptide" evidence="1">
    <location>
        <begin position="1"/>
        <end position="20"/>
    </location>
</feature>
<feature type="propeptide" id="PRO_0000453215" evidence="5">
    <location>
        <begin position="21"/>
        <end position="31"/>
    </location>
</feature>
<feature type="chain" id="PRO_0000453216" description="Conotoxin Pl071" evidence="2">
    <location>
        <begin position="32"/>
        <end position="69"/>
    </location>
</feature>
<feature type="modified residue" description="Tyrosine amide" evidence="2">
    <location>
        <position position="69"/>
    </location>
</feature>
<proteinExistence type="evidence at protein level"/>